<accession>P52371</accession>
<name>GM_EHV2</name>
<gene>
    <name evidence="1" type="primary">gM</name>
    <name type="ORF">39</name>
</gene>
<dbReference type="EMBL" id="U20824">
    <property type="protein sequence ID" value="AAC13827.1"/>
    <property type="molecule type" value="Genomic_DNA"/>
</dbReference>
<dbReference type="PIR" id="S55634">
    <property type="entry name" value="S55634"/>
</dbReference>
<dbReference type="KEGG" id="vg:1461035"/>
<dbReference type="Proteomes" id="UP000007083">
    <property type="component" value="Segment"/>
</dbReference>
<dbReference type="GO" id="GO:0044175">
    <property type="term" value="C:host cell endosome membrane"/>
    <property type="evidence" value="ECO:0007669"/>
    <property type="project" value="UniProtKB-SubCell"/>
</dbReference>
<dbReference type="GO" id="GO:0044177">
    <property type="term" value="C:host cell Golgi apparatus"/>
    <property type="evidence" value="ECO:0007669"/>
    <property type="project" value="UniProtKB-SubCell"/>
</dbReference>
<dbReference type="GO" id="GO:0044201">
    <property type="term" value="C:host cell nuclear inner membrane"/>
    <property type="evidence" value="ECO:0007669"/>
    <property type="project" value="UniProtKB-SubCell"/>
</dbReference>
<dbReference type="GO" id="GO:0016020">
    <property type="term" value="C:membrane"/>
    <property type="evidence" value="ECO:0007669"/>
    <property type="project" value="UniProtKB-KW"/>
</dbReference>
<dbReference type="GO" id="GO:0019031">
    <property type="term" value="C:viral envelope"/>
    <property type="evidence" value="ECO:0007669"/>
    <property type="project" value="UniProtKB-KW"/>
</dbReference>
<dbReference type="GO" id="GO:0055036">
    <property type="term" value="C:virion membrane"/>
    <property type="evidence" value="ECO:0007669"/>
    <property type="project" value="UniProtKB-SubCell"/>
</dbReference>
<dbReference type="HAMAP" id="MF_04035">
    <property type="entry name" value="HSV_GM"/>
    <property type="match status" value="1"/>
</dbReference>
<dbReference type="InterPro" id="IPR000785">
    <property type="entry name" value="Herpes_glycop_M"/>
</dbReference>
<dbReference type="Pfam" id="PF01528">
    <property type="entry name" value="Herpes_glycop"/>
    <property type="match status" value="1"/>
</dbReference>
<dbReference type="PRINTS" id="PR00333">
    <property type="entry name" value="HSVINTEGRLMP"/>
</dbReference>
<protein>
    <recommendedName>
        <fullName evidence="1">Envelope glycoprotein M</fullName>
        <shortName evidence="1">gM</shortName>
    </recommendedName>
</protein>
<evidence type="ECO:0000255" key="1">
    <source>
        <dbReference type="HAMAP-Rule" id="MF_04035"/>
    </source>
</evidence>
<evidence type="ECO:0000256" key="2">
    <source>
        <dbReference type="SAM" id="MobiDB-lite"/>
    </source>
</evidence>
<reference key="1">
    <citation type="journal article" date="1995" name="J. Mol. Biol.">
        <title>The DNA sequence of equine herpesvirus 2.</title>
        <authorList>
            <person name="Telford E.A.R."/>
            <person name="Watson M.S."/>
            <person name="Aird H.C."/>
            <person name="Perry J."/>
            <person name="Davison A.J."/>
        </authorList>
    </citation>
    <scope>NUCLEOTIDE SEQUENCE [LARGE SCALE GENOMIC DNA]</scope>
</reference>
<organismHost>
    <name type="scientific">Equus caballus</name>
    <name type="common">Horse</name>
    <dbReference type="NCBI Taxonomy" id="9796"/>
</organismHost>
<feature type="chain" id="PRO_0000115778" description="Envelope glycoprotein M">
    <location>
        <begin position="1"/>
        <end position="378"/>
    </location>
</feature>
<feature type="topological domain" description="Intravirion" evidence="1">
    <location>
        <begin position="1"/>
        <end position="16"/>
    </location>
</feature>
<feature type="transmembrane region" description="Helical" evidence="1">
    <location>
        <begin position="17"/>
        <end position="37"/>
    </location>
</feature>
<feature type="topological domain" description="Virion surface" evidence="1">
    <location>
        <begin position="38"/>
        <end position="84"/>
    </location>
</feature>
<feature type="transmembrane region" description="Helical" evidence="1">
    <location>
        <begin position="85"/>
        <end position="105"/>
    </location>
</feature>
<feature type="topological domain" description="Intravirion" evidence="1">
    <location>
        <begin position="106"/>
        <end position="118"/>
    </location>
</feature>
<feature type="transmembrane region" description="Helical" evidence="1">
    <location>
        <begin position="119"/>
        <end position="139"/>
    </location>
</feature>
<feature type="topological domain" description="Virion surface" evidence="1">
    <location>
        <begin position="140"/>
        <end position="150"/>
    </location>
</feature>
<feature type="transmembrane region" description="Helical" evidence="1">
    <location>
        <begin position="151"/>
        <end position="171"/>
    </location>
</feature>
<feature type="topological domain" description="Intravirion" evidence="1">
    <location>
        <begin position="172"/>
        <end position="210"/>
    </location>
</feature>
<feature type="transmembrane region" description="Helical" evidence="1">
    <location>
        <begin position="211"/>
        <end position="231"/>
    </location>
</feature>
<feature type="topological domain" description="Virion surface" evidence="1">
    <location>
        <begin position="232"/>
        <end position="239"/>
    </location>
</feature>
<feature type="transmembrane region" description="Helical" evidence="1">
    <location>
        <begin position="240"/>
        <end position="260"/>
    </location>
</feature>
<feature type="topological domain" description="Intravirion" evidence="1">
    <location>
        <begin position="261"/>
        <end position="268"/>
    </location>
</feature>
<feature type="transmembrane region" description="Helical" evidence="1">
    <location>
        <begin position="269"/>
        <end position="289"/>
    </location>
</feature>
<feature type="topological domain" description="Virion surface" evidence="1">
    <location>
        <begin position="290"/>
        <end position="303"/>
    </location>
</feature>
<feature type="transmembrane region" description="Helical" evidence="1">
    <location>
        <begin position="304"/>
        <end position="324"/>
    </location>
</feature>
<feature type="topological domain" description="Intravirion" evidence="1">
    <location>
        <begin position="325"/>
        <end position="378"/>
    </location>
</feature>
<feature type="region of interest" description="Disordered" evidence="2">
    <location>
        <begin position="347"/>
        <end position="378"/>
    </location>
</feature>
<feature type="compositionally biased region" description="Acidic residues" evidence="2">
    <location>
        <begin position="363"/>
        <end position="378"/>
    </location>
</feature>
<feature type="disulfide bond" description="Interchain (with gN)" evidence="1">
    <location>
        <position position="44"/>
    </location>
</feature>
<proteinExistence type="inferred from homology"/>
<sequence length="378" mass="43372">MKSSKSDLFIYKTWFKLLVLYFVMFVLSATVPIAASFPGLGFPCYYNALVNYSAINLTERNVAKHLTPTLYLEEPEMFAYMTFTFLVDCFAAVYYFLGALAIMLAKRHFVVSLTTLSQWIAMVGTPTLILIGMWRMWTIQLFIQTLSYKHIYLSAFVYLIHFLLSFLHTQCYISRNSQLWSLKVLEQGIPPNTLLDTVVFTIKPLLANCQLFCLGLEMLVFSLSFMMAIGNSFYVLVSDIVFGAINLYLALVLFWVLLTELYLVKYMTFVMGFYLGGLIGCIFLLVPLWRYEQIFVAANLRSPILINILVIFFLCTLSALVRLLRMTWFSPTKPSYEPIQLKNIKHRRVKLQSPSGPSILEEGSSDEGSEDSEEEEEL</sequence>
<organism>
    <name type="scientific">Equine herpesvirus 2 (strain 86/87)</name>
    <name type="common">EHV-2</name>
    <dbReference type="NCBI Taxonomy" id="82831"/>
    <lineage>
        <taxon>Viruses</taxon>
        <taxon>Duplodnaviria</taxon>
        <taxon>Heunggongvirae</taxon>
        <taxon>Peploviricota</taxon>
        <taxon>Herviviricetes</taxon>
        <taxon>Herpesvirales</taxon>
        <taxon>Orthoherpesviridae</taxon>
        <taxon>Gammaherpesvirinae</taxon>
        <taxon>Percavirus</taxon>
        <taxon>Percavirus equidgamma2</taxon>
        <taxon>Equid gammaherpesvirus 2</taxon>
    </lineage>
</organism>
<comment type="function">
    <text evidence="1">Envelope glycoprotein important for virion assembly and egress. Plays a role in the correct incorporation of gH-gL into virion membrane. Directs the glycoprotein N (gN) to the host trans-Golgi network.</text>
</comment>
<comment type="subunit">
    <text evidence="1">Interacts (via N-terminus) with gN (via N-terminus). The gM-gN heterodimer forms the gCII complex.</text>
</comment>
<comment type="subcellular location">
    <subcellularLocation>
        <location evidence="1">Virion membrane</location>
        <topology evidence="1">Multi-pass membrane protein</topology>
    </subcellularLocation>
    <subcellularLocation>
        <location evidence="1">Host Golgi apparatus</location>
        <location evidence="1">Host trans-Golgi network</location>
    </subcellularLocation>
    <subcellularLocation>
        <location evidence="1">Host endosome membrane</location>
        <topology evidence="1">Multi-pass membrane protein</topology>
    </subcellularLocation>
    <subcellularLocation>
        <location evidence="1">Host nucleus inner membrane</location>
        <topology evidence="1">Multi-pass membrane protein</topology>
    </subcellularLocation>
    <text evidence="1">During virion morphogenesis, this protein accumulates in the trans-Golgi network where secondary envelopment occurs.</text>
</comment>
<comment type="similarity">
    <text evidence="1">Belongs to the herpesviridae glycoprotein M family.</text>
</comment>
<keyword id="KW-1015">Disulfide bond</keyword>
<keyword id="KW-0325">Glycoprotein</keyword>
<keyword id="KW-1039">Host endosome</keyword>
<keyword id="KW-1040">Host Golgi apparatus</keyword>
<keyword id="KW-1043">Host membrane</keyword>
<keyword id="KW-1048">Host nucleus</keyword>
<keyword id="KW-0472">Membrane</keyword>
<keyword id="KW-1185">Reference proteome</keyword>
<keyword id="KW-0812">Transmembrane</keyword>
<keyword id="KW-1133">Transmembrane helix</keyword>
<keyword id="KW-0261">Viral envelope protein</keyword>
<keyword id="KW-0946">Virion</keyword>